<accession>Q9D6W7</accession>
<accession>B1AUM9</accession>
<comment type="subcellular location">
    <subcellularLocation>
        <location evidence="4">Membrane</location>
        <topology evidence="4">Single-pass type I membrane protein</topology>
    </subcellularLocation>
</comment>
<comment type="similarity">
    <text evidence="4">Belongs to the CD164 family.</text>
</comment>
<keyword id="KW-0325">Glycoprotein</keyword>
<keyword id="KW-0472">Membrane</keyword>
<keyword id="KW-1185">Reference proteome</keyword>
<keyword id="KW-0732">Signal</keyword>
<keyword id="KW-0812">Transmembrane</keyword>
<keyword id="KW-1133">Transmembrane helix</keyword>
<evidence type="ECO:0000250" key="1"/>
<evidence type="ECO:0000255" key="2"/>
<evidence type="ECO:0000256" key="3">
    <source>
        <dbReference type="SAM" id="MobiDB-lite"/>
    </source>
</evidence>
<evidence type="ECO:0000305" key="4"/>
<name>C16L2_MOUSE</name>
<gene>
    <name type="primary">Cd164l2</name>
</gene>
<reference key="1">
    <citation type="journal article" date="2005" name="Science">
        <title>The transcriptional landscape of the mammalian genome.</title>
        <authorList>
            <person name="Carninci P."/>
            <person name="Kasukawa T."/>
            <person name="Katayama S."/>
            <person name="Gough J."/>
            <person name="Frith M.C."/>
            <person name="Maeda N."/>
            <person name="Oyama R."/>
            <person name="Ravasi T."/>
            <person name="Lenhard B."/>
            <person name="Wells C."/>
            <person name="Kodzius R."/>
            <person name="Shimokawa K."/>
            <person name="Bajic V.B."/>
            <person name="Brenner S.E."/>
            <person name="Batalov S."/>
            <person name="Forrest A.R."/>
            <person name="Zavolan M."/>
            <person name="Davis M.J."/>
            <person name="Wilming L.G."/>
            <person name="Aidinis V."/>
            <person name="Allen J.E."/>
            <person name="Ambesi-Impiombato A."/>
            <person name="Apweiler R."/>
            <person name="Aturaliya R.N."/>
            <person name="Bailey T.L."/>
            <person name="Bansal M."/>
            <person name="Baxter L."/>
            <person name="Beisel K.W."/>
            <person name="Bersano T."/>
            <person name="Bono H."/>
            <person name="Chalk A.M."/>
            <person name="Chiu K.P."/>
            <person name="Choudhary V."/>
            <person name="Christoffels A."/>
            <person name="Clutterbuck D.R."/>
            <person name="Crowe M.L."/>
            <person name="Dalla E."/>
            <person name="Dalrymple B.P."/>
            <person name="de Bono B."/>
            <person name="Della Gatta G."/>
            <person name="di Bernardo D."/>
            <person name="Down T."/>
            <person name="Engstrom P."/>
            <person name="Fagiolini M."/>
            <person name="Faulkner G."/>
            <person name="Fletcher C.F."/>
            <person name="Fukushima T."/>
            <person name="Furuno M."/>
            <person name="Futaki S."/>
            <person name="Gariboldi M."/>
            <person name="Georgii-Hemming P."/>
            <person name="Gingeras T.R."/>
            <person name="Gojobori T."/>
            <person name="Green R.E."/>
            <person name="Gustincich S."/>
            <person name="Harbers M."/>
            <person name="Hayashi Y."/>
            <person name="Hensch T.K."/>
            <person name="Hirokawa N."/>
            <person name="Hill D."/>
            <person name="Huminiecki L."/>
            <person name="Iacono M."/>
            <person name="Ikeo K."/>
            <person name="Iwama A."/>
            <person name="Ishikawa T."/>
            <person name="Jakt M."/>
            <person name="Kanapin A."/>
            <person name="Katoh M."/>
            <person name="Kawasawa Y."/>
            <person name="Kelso J."/>
            <person name="Kitamura H."/>
            <person name="Kitano H."/>
            <person name="Kollias G."/>
            <person name="Krishnan S.P."/>
            <person name="Kruger A."/>
            <person name="Kummerfeld S.K."/>
            <person name="Kurochkin I.V."/>
            <person name="Lareau L.F."/>
            <person name="Lazarevic D."/>
            <person name="Lipovich L."/>
            <person name="Liu J."/>
            <person name="Liuni S."/>
            <person name="McWilliam S."/>
            <person name="Madan Babu M."/>
            <person name="Madera M."/>
            <person name="Marchionni L."/>
            <person name="Matsuda H."/>
            <person name="Matsuzawa S."/>
            <person name="Miki H."/>
            <person name="Mignone F."/>
            <person name="Miyake S."/>
            <person name="Morris K."/>
            <person name="Mottagui-Tabar S."/>
            <person name="Mulder N."/>
            <person name="Nakano N."/>
            <person name="Nakauchi H."/>
            <person name="Ng P."/>
            <person name="Nilsson R."/>
            <person name="Nishiguchi S."/>
            <person name="Nishikawa S."/>
            <person name="Nori F."/>
            <person name="Ohara O."/>
            <person name="Okazaki Y."/>
            <person name="Orlando V."/>
            <person name="Pang K.C."/>
            <person name="Pavan W.J."/>
            <person name="Pavesi G."/>
            <person name="Pesole G."/>
            <person name="Petrovsky N."/>
            <person name="Piazza S."/>
            <person name="Reed J."/>
            <person name="Reid J.F."/>
            <person name="Ring B.Z."/>
            <person name="Ringwald M."/>
            <person name="Rost B."/>
            <person name="Ruan Y."/>
            <person name="Salzberg S.L."/>
            <person name="Sandelin A."/>
            <person name="Schneider C."/>
            <person name="Schoenbach C."/>
            <person name="Sekiguchi K."/>
            <person name="Semple C.A."/>
            <person name="Seno S."/>
            <person name="Sessa L."/>
            <person name="Sheng Y."/>
            <person name="Shibata Y."/>
            <person name="Shimada H."/>
            <person name="Shimada K."/>
            <person name="Silva D."/>
            <person name="Sinclair B."/>
            <person name="Sperling S."/>
            <person name="Stupka E."/>
            <person name="Sugiura K."/>
            <person name="Sultana R."/>
            <person name="Takenaka Y."/>
            <person name="Taki K."/>
            <person name="Tammoja K."/>
            <person name="Tan S.L."/>
            <person name="Tang S."/>
            <person name="Taylor M.S."/>
            <person name="Tegner J."/>
            <person name="Teichmann S.A."/>
            <person name="Ueda H.R."/>
            <person name="van Nimwegen E."/>
            <person name="Verardo R."/>
            <person name="Wei C.L."/>
            <person name="Yagi K."/>
            <person name="Yamanishi H."/>
            <person name="Zabarovsky E."/>
            <person name="Zhu S."/>
            <person name="Zimmer A."/>
            <person name="Hide W."/>
            <person name="Bult C."/>
            <person name="Grimmond S.M."/>
            <person name="Teasdale R.D."/>
            <person name="Liu E.T."/>
            <person name="Brusic V."/>
            <person name="Quackenbush J."/>
            <person name="Wahlestedt C."/>
            <person name="Mattick J.S."/>
            <person name="Hume D.A."/>
            <person name="Kai C."/>
            <person name="Sasaki D."/>
            <person name="Tomaru Y."/>
            <person name="Fukuda S."/>
            <person name="Kanamori-Katayama M."/>
            <person name="Suzuki M."/>
            <person name="Aoki J."/>
            <person name="Arakawa T."/>
            <person name="Iida J."/>
            <person name="Imamura K."/>
            <person name="Itoh M."/>
            <person name="Kato T."/>
            <person name="Kawaji H."/>
            <person name="Kawagashira N."/>
            <person name="Kawashima T."/>
            <person name="Kojima M."/>
            <person name="Kondo S."/>
            <person name="Konno H."/>
            <person name="Nakano K."/>
            <person name="Ninomiya N."/>
            <person name="Nishio T."/>
            <person name="Okada M."/>
            <person name="Plessy C."/>
            <person name="Shibata K."/>
            <person name="Shiraki T."/>
            <person name="Suzuki S."/>
            <person name="Tagami M."/>
            <person name="Waki K."/>
            <person name="Watahiki A."/>
            <person name="Okamura-Oho Y."/>
            <person name="Suzuki H."/>
            <person name="Kawai J."/>
            <person name="Hayashizaki Y."/>
        </authorList>
    </citation>
    <scope>NUCLEOTIDE SEQUENCE [LARGE SCALE MRNA]</scope>
    <source>
        <strain>C57BL/6J</strain>
        <tissue>Tongue</tissue>
    </source>
</reference>
<reference key="2">
    <citation type="journal article" date="2009" name="PLoS Biol.">
        <title>Lineage-specific biology revealed by a finished genome assembly of the mouse.</title>
        <authorList>
            <person name="Church D.M."/>
            <person name="Goodstadt L."/>
            <person name="Hillier L.W."/>
            <person name="Zody M.C."/>
            <person name="Goldstein S."/>
            <person name="She X."/>
            <person name="Bult C.J."/>
            <person name="Agarwala R."/>
            <person name="Cherry J.L."/>
            <person name="DiCuccio M."/>
            <person name="Hlavina W."/>
            <person name="Kapustin Y."/>
            <person name="Meric P."/>
            <person name="Maglott D."/>
            <person name="Birtle Z."/>
            <person name="Marques A.C."/>
            <person name="Graves T."/>
            <person name="Zhou S."/>
            <person name="Teague B."/>
            <person name="Potamousis K."/>
            <person name="Churas C."/>
            <person name="Place M."/>
            <person name="Herschleb J."/>
            <person name="Runnheim R."/>
            <person name="Forrest D."/>
            <person name="Amos-Landgraf J."/>
            <person name="Schwartz D.C."/>
            <person name="Cheng Z."/>
            <person name="Lindblad-Toh K."/>
            <person name="Eichler E.E."/>
            <person name="Ponting C.P."/>
        </authorList>
    </citation>
    <scope>NUCLEOTIDE SEQUENCE [LARGE SCALE GENOMIC DNA]</scope>
    <source>
        <strain>C57BL/6J</strain>
    </source>
</reference>
<protein>
    <recommendedName>
        <fullName>CD164 sialomucin-like 2 protein</fullName>
    </recommendedName>
</protein>
<sequence length="172" mass="18220">MAAPGPRALRAALCGGCCCLLLCAQLVLAGKGARGFGRGALLRLNVWPTTQGGCKHLGHCEHCVDRAHNFSICVWQQCGPEEPGHCVAQAEVVKEGCSIYNHSESCPASHHHSTEEPKPSTTGSPPIPEDHSPGFDGASFIGGIVLVLSLQATAFFVLRFLKAKDSTYQTLI</sequence>
<proteinExistence type="evidence at transcript level"/>
<organism>
    <name type="scientific">Mus musculus</name>
    <name type="common">Mouse</name>
    <dbReference type="NCBI Taxonomy" id="10090"/>
    <lineage>
        <taxon>Eukaryota</taxon>
        <taxon>Metazoa</taxon>
        <taxon>Chordata</taxon>
        <taxon>Craniata</taxon>
        <taxon>Vertebrata</taxon>
        <taxon>Euteleostomi</taxon>
        <taxon>Mammalia</taxon>
        <taxon>Eutheria</taxon>
        <taxon>Euarchontoglires</taxon>
        <taxon>Glires</taxon>
        <taxon>Rodentia</taxon>
        <taxon>Myomorpha</taxon>
        <taxon>Muroidea</taxon>
        <taxon>Muridae</taxon>
        <taxon>Murinae</taxon>
        <taxon>Mus</taxon>
        <taxon>Mus</taxon>
    </lineage>
</organism>
<dbReference type="EMBL" id="AK009888">
    <property type="protein sequence ID" value="BAB26564.1"/>
    <property type="molecule type" value="mRNA"/>
</dbReference>
<dbReference type="EMBL" id="AL671858">
    <property type="status" value="NOT_ANNOTATED_CDS"/>
    <property type="molecule type" value="Genomic_DNA"/>
</dbReference>
<dbReference type="CCDS" id="CCDS38901.1"/>
<dbReference type="RefSeq" id="NP_081428.1">
    <property type="nucleotide sequence ID" value="NM_027152.1"/>
</dbReference>
<dbReference type="FunCoup" id="Q9D6W7">
    <property type="interactions" value="55"/>
</dbReference>
<dbReference type="STRING" id="10090.ENSMUSP00000101530"/>
<dbReference type="GlyCosmos" id="Q9D6W7">
    <property type="glycosylation" value="2 sites, No reported glycans"/>
</dbReference>
<dbReference type="GlyGen" id="Q9D6W7">
    <property type="glycosylation" value="3 sites, 1 O-linked glycan (1 site)"/>
</dbReference>
<dbReference type="iPTMnet" id="Q9D6W7"/>
<dbReference type="PhosphoSitePlus" id="Q9D6W7"/>
<dbReference type="PaxDb" id="10090-ENSMUSP00000101530"/>
<dbReference type="ProteomicsDB" id="265323"/>
<dbReference type="Antibodypedia" id="74085">
    <property type="antibodies" value="12 antibodies from 9 providers"/>
</dbReference>
<dbReference type="Ensembl" id="ENSMUST00000105910.2">
    <property type="protein sequence ID" value="ENSMUSP00000101530.2"/>
    <property type="gene ID" value="ENSMUSG00000028865.15"/>
</dbReference>
<dbReference type="GeneID" id="69655"/>
<dbReference type="KEGG" id="mmu:69655"/>
<dbReference type="UCSC" id="uc008vcj.1">
    <property type="organism name" value="mouse"/>
</dbReference>
<dbReference type="AGR" id="MGI:1916905"/>
<dbReference type="CTD" id="388611"/>
<dbReference type="MGI" id="MGI:1916905">
    <property type="gene designation" value="Cd164l2"/>
</dbReference>
<dbReference type="VEuPathDB" id="HostDB:ENSMUSG00000028865"/>
<dbReference type="eggNOG" id="ENOG502S6M0">
    <property type="taxonomic scope" value="Eukaryota"/>
</dbReference>
<dbReference type="GeneTree" id="ENSGT00530000063929"/>
<dbReference type="HOGENOM" id="CLU_133331_0_0_1"/>
<dbReference type="InParanoid" id="Q9D6W7"/>
<dbReference type="OMA" id="VQGGCKQ"/>
<dbReference type="OrthoDB" id="76474at9989"/>
<dbReference type="PhylomeDB" id="Q9D6W7"/>
<dbReference type="TreeFam" id="TF333380"/>
<dbReference type="BioGRID-ORCS" id="69655">
    <property type="hits" value="5 hits in 78 CRISPR screens"/>
</dbReference>
<dbReference type="PRO" id="PR:Q9D6W7"/>
<dbReference type="Proteomes" id="UP000000589">
    <property type="component" value="Chromosome 4"/>
</dbReference>
<dbReference type="RNAct" id="Q9D6W7">
    <property type="molecule type" value="protein"/>
</dbReference>
<dbReference type="Bgee" id="ENSMUSG00000028865">
    <property type="expression patterns" value="Expressed in secondary oocyte and 86 other cell types or tissues"/>
</dbReference>
<dbReference type="GO" id="GO:0016020">
    <property type="term" value="C:membrane"/>
    <property type="evidence" value="ECO:0007669"/>
    <property type="project" value="UniProtKB-SubCell"/>
</dbReference>
<dbReference type="InterPro" id="IPR007947">
    <property type="entry name" value="CD164_MGC24"/>
</dbReference>
<dbReference type="PANTHER" id="PTHR11337:SF11">
    <property type="entry name" value="CD164 SIALOMUCIN-LIKE 2 PROTEIN"/>
    <property type="match status" value="1"/>
</dbReference>
<dbReference type="PANTHER" id="PTHR11337">
    <property type="entry name" value="MUCIN/PORIMIN"/>
    <property type="match status" value="1"/>
</dbReference>
<dbReference type="Pfam" id="PF05283">
    <property type="entry name" value="MGC-24"/>
    <property type="match status" value="1"/>
</dbReference>
<feature type="signal peptide" evidence="1">
    <location>
        <begin position="1"/>
        <end position="29"/>
    </location>
</feature>
<feature type="chain" id="PRO_0000045780" description="CD164 sialomucin-like 2 protein">
    <location>
        <begin position="30"/>
        <end position="172"/>
    </location>
</feature>
<feature type="topological domain" description="Extracellular" evidence="2">
    <location>
        <begin position="30"/>
        <end position="137"/>
    </location>
</feature>
<feature type="transmembrane region" description="Helical" evidence="2">
    <location>
        <begin position="138"/>
        <end position="158"/>
    </location>
</feature>
<feature type="topological domain" description="Cytoplasmic" evidence="2">
    <location>
        <begin position="159"/>
        <end position="172"/>
    </location>
</feature>
<feature type="region of interest" description="Disordered" evidence="3">
    <location>
        <begin position="108"/>
        <end position="132"/>
    </location>
</feature>
<feature type="glycosylation site" description="N-linked (GlcNAc...) asparagine" evidence="2">
    <location>
        <position position="69"/>
    </location>
</feature>
<feature type="glycosylation site" description="N-linked (GlcNAc...) asparagine" evidence="2">
    <location>
        <position position="101"/>
    </location>
</feature>